<protein>
    <recommendedName>
        <fullName>Giardin subunit gamma</fullName>
    </recommendedName>
    <alternativeName>
        <fullName evidence="5 6 7">Gamma-giardin</fullName>
    </alternativeName>
    <alternativeName>
        <fullName evidence="7">Glgamma-giardin</fullName>
    </alternativeName>
</protein>
<feature type="chain" id="PRO_0000087485" description="Giardin subunit gamma">
    <location>
        <begin position="1"/>
        <end position="311"/>
    </location>
</feature>
<feature type="coiled-coil region" evidence="1">
    <location>
        <begin position="185"/>
        <end position="233"/>
    </location>
</feature>
<organism>
    <name type="scientific">Giardia intestinalis</name>
    <name type="common">Giardia lamblia</name>
    <dbReference type="NCBI Taxonomy" id="5741"/>
    <lineage>
        <taxon>Eukaryota</taxon>
        <taxon>Metamonada</taxon>
        <taxon>Diplomonadida</taxon>
        <taxon>Hexamitidae</taxon>
        <taxon>Giardiinae</taxon>
        <taxon>Giardia</taxon>
    </lineage>
</organism>
<accession>P38413</accession>
<sequence length="311" mass="35632">MKSSFSTVSSYSDHKFAVKDAPTTIRDSLRLTNAVEDPGYMTLSLISENKVDDLMFNSKMFQDHMVNDFRPKFSHADSSEIMITLNNLKNDILSTKNIRELESTDLRSEVAKQFAARRAELVSHLNASLRPLIDEVFSMEQRLKAFDAENADFVGKTKQYKSTFRSEVHSRIRAGQSKLDALRHGLQTEINSLEAIIEREFAQAANRLNQEVSNFKESFDASERNIKLQKKHVISGMNEKIKSFAESVAKYLPILKKNSEERRFNQMMMQKNLAEIMTVLSDNSEHFGDYCFSDLVPDTRIFDAIMTTKVD</sequence>
<reference key="1">
    <citation type="journal article" date="1992" name="Mol. Biochem. Parasitol.">
        <title>Identification and characterization of gamma-giardin and the gamma-giardin gene from Giardia lamblia.</title>
        <authorList>
            <person name="Nohria A."/>
            <person name="Alonso R.A."/>
            <person name="Peattie D.A."/>
        </authorList>
    </citation>
    <scope>NUCLEOTIDE SEQUENCE [GENOMIC DNA]</scope>
    <scope>PROTEIN SEQUENCE OF 145-156</scope>
    <scope>SUBCELLULAR LOCATION</scope>
    <source>
        <strain>Portland-1</strain>
    </source>
</reference>
<reference key="2">
    <citation type="journal article" date="2010" name="Parasitol. Res.">
        <title>Identification of end-binding 1 (EB1) interacting proteins in Giardia lamblia.</title>
        <authorList>
            <person name="Kang K."/>
            <person name="Kim J."/>
            <person name="Yong T.S."/>
            <person name="Park S.J."/>
        </authorList>
    </citation>
    <scope>INTERACTION WITH EB1</scope>
    <scope>SUBCELLULAR LOCATION</scope>
    <source>
        <strain evidence="6">ATCC 30957 / WB</strain>
    </source>
</reference>
<reference key="3">
    <citation type="journal article" date="2019" name="Parasit. Vectors">
        <title>Role of gamma-giardin in ventral disc formation of Giardia lamblia.</title>
        <authorList>
            <person name="Kim J."/>
            <person name="Park S.J."/>
        </authorList>
    </citation>
    <scope>IDENTIFICATION BY MASS SPECTROMETRY</scope>
    <scope>FUNCTION</scope>
    <scope>SUBCELLULAR LOCATION</scope>
    <scope>DEVELOPMENTAL STAGE</scope>
    <scope>DISRUPTION PHENOTYPE</scope>
    <source>
        <strain evidence="7">ATCC 30957 / WB</strain>
    </source>
</reference>
<comment type="function">
    <text evidence="4 8">Giardins are involved in parasite attachment to the intestinal mucosa and in the cytoskeletal disassembly and reassembly that marks the transition from infectious trophozoite to transmissible cyst (Probable). They may interact with other cytoskeletal proteins such as microtubules in the microribbons or crossbridges, to maintain the integrity of the ventral disk (Probable). Involved in formation of the ventral disk (PubMed:31088539).</text>
</comment>
<comment type="subunit">
    <text evidence="3">Interacts with EB1.</text>
</comment>
<comment type="subcellular location">
    <subcellularLocation>
        <location evidence="2 3 4">Cytoplasm</location>
        <location evidence="2 3 4">Cytoskeleton</location>
    </subcellularLocation>
    <text evidence="2 3 4">Microribbons of ventral disk (PubMed:1474999). Localizes to adhesive disk in trophozoites (PubMed:19953272, PubMed:31088539). Localizes to median body of the trophozoites, especially at G2 phase of the cell cycle (PubMed:31088539). Localizes mainly to the trail structure of the adhesive disk in encysting cells (PubMed:31088539).</text>
</comment>
<comment type="developmental stage">
    <text evidence="4">Up-regulated expression during G2 phase (at protein level). Down-regulated expression during encystation (at protein level).</text>
</comment>
<comment type="disruption phenotype">
    <text evidence="4">Morpholino knockdown has deformities in the ventral disk including shortening of the microribbon structures and flattening of the ventral groove, and increased number of cells with four nuclei. Knockdown has no effect in the adherence ability of the cells.</text>
</comment>
<dbReference type="EMBL" id="X55287">
    <property type="protein sequence ID" value="CAA39002.1"/>
    <property type="molecule type" value="Genomic_DNA"/>
</dbReference>
<dbReference type="PIR" id="A48453">
    <property type="entry name" value="S25163"/>
</dbReference>
<dbReference type="RefSeq" id="XP_001706274.1">
    <property type="nucleotide sequence ID" value="XM_001706222.1"/>
</dbReference>
<dbReference type="SMR" id="P38413"/>
<dbReference type="GeneID" id="5699172"/>
<dbReference type="KEGG" id="gla:GL50803_0017230"/>
<dbReference type="VEuPathDB" id="GiardiaDB:GL50581_4532"/>
<dbReference type="VEuPathDB" id="GiardiaDB:GL50803_0017230"/>
<dbReference type="VEuPathDB" id="GiardiaDB:QR46_3560"/>
<dbReference type="OMA" id="SEHFGDX"/>
<dbReference type="OrthoDB" id="10249469at2759"/>
<dbReference type="GO" id="GO:0005737">
    <property type="term" value="C:cytoplasm"/>
    <property type="evidence" value="ECO:0007669"/>
    <property type="project" value="UniProtKB-KW"/>
</dbReference>
<dbReference type="GO" id="GO:0097568">
    <property type="term" value="C:median body"/>
    <property type="evidence" value="ECO:0000314"/>
    <property type="project" value="UniProtKB"/>
</dbReference>
<dbReference type="GO" id="GO:0005874">
    <property type="term" value="C:microtubule"/>
    <property type="evidence" value="ECO:0007669"/>
    <property type="project" value="UniProtKB-KW"/>
</dbReference>
<dbReference type="GO" id="GO:0097597">
    <property type="term" value="C:ventral disc"/>
    <property type="evidence" value="ECO:0000314"/>
    <property type="project" value="UniProtKB"/>
</dbReference>
<dbReference type="GO" id="GO:0097594">
    <property type="term" value="C:ventral disc dorsal microribbon"/>
    <property type="evidence" value="ECO:0000314"/>
    <property type="project" value="UniProtKB"/>
</dbReference>
<dbReference type="GO" id="GO:0005200">
    <property type="term" value="F:structural constituent of cytoskeleton"/>
    <property type="evidence" value="ECO:0000314"/>
    <property type="project" value="UniProtKB"/>
</dbReference>
<dbReference type="GO" id="GO:0000226">
    <property type="term" value="P:microtubule cytoskeleton organization"/>
    <property type="evidence" value="ECO:0000315"/>
    <property type="project" value="UniProtKB"/>
</dbReference>
<dbReference type="GO" id="GO:0000278">
    <property type="term" value="P:mitotic cell cycle"/>
    <property type="evidence" value="ECO:0000270"/>
    <property type="project" value="UniProtKB"/>
</dbReference>
<name>GIAG_GIAIN</name>
<proteinExistence type="evidence at protein level"/>
<keyword id="KW-0175">Coiled coil</keyword>
<keyword id="KW-0963">Cytoplasm</keyword>
<keyword id="KW-0206">Cytoskeleton</keyword>
<keyword id="KW-0903">Direct protein sequencing</keyword>
<keyword id="KW-0493">Microtubule</keyword>
<evidence type="ECO:0000255" key="1"/>
<evidence type="ECO:0000269" key="2">
    <source>
    </source>
</evidence>
<evidence type="ECO:0000269" key="3">
    <source>
    </source>
</evidence>
<evidence type="ECO:0000269" key="4">
    <source>
    </source>
</evidence>
<evidence type="ECO:0000303" key="5">
    <source>
    </source>
</evidence>
<evidence type="ECO:0000303" key="6">
    <source>
    </source>
</evidence>
<evidence type="ECO:0000303" key="7">
    <source>
    </source>
</evidence>
<evidence type="ECO:0000305" key="8"/>